<evidence type="ECO:0000250" key="1">
    <source>
        <dbReference type="UniProtKB" id="Q04571"/>
    </source>
</evidence>
<evidence type="ECO:0000255" key="2"/>
<evidence type="ECO:0000255" key="3">
    <source>
        <dbReference type="PROSITE-ProRule" id="PRU00498"/>
    </source>
</evidence>
<evidence type="ECO:0000269" key="4">
    <source>
    </source>
</evidence>
<evidence type="ECO:0000303" key="5">
    <source>
    </source>
</evidence>
<evidence type="ECO:0000305" key="6"/>
<evidence type="ECO:0000305" key="7">
    <source>
    </source>
</evidence>
<dbReference type="EMBL" id="AF081493">
    <property type="protein sequence ID" value="AAD41222.1"/>
    <property type="molecule type" value="Genomic_DNA"/>
</dbReference>
<dbReference type="GO" id="GO:0005576">
    <property type="term" value="C:extracellular region"/>
    <property type="evidence" value="ECO:0007669"/>
    <property type="project" value="UniProtKB-KW"/>
</dbReference>
<dbReference type="GO" id="GO:0009277">
    <property type="term" value="C:fungal-type cell wall"/>
    <property type="evidence" value="ECO:0007669"/>
    <property type="project" value="InterPro"/>
</dbReference>
<dbReference type="GO" id="GO:0005199">
    <property type="term" value="F:structural constituent of cell wall"/>
    <property type="evidence" value="ECO:0007669"/>
    <property type="project" value="InterPro"/>
</dbReference>
<dbReference type="CDD" id="cd23507">
    <property type="entry name" value="hydrophobin_I"/>
    <property type="match status" value="1"/>
</dbReference>
<dbReference type="InterPro" id="IPR001338">
    <property type="entry name" value="Hydrophobin"/>
</dbReference>
<dbReference type="Pfam" id="PF01185">
    <property type="entry name" value="Hydrophobin"/>
    <property type="match status" value="1"/>
</dbReference>
<dbReference type="SMART" id="SM00075">
    <property type="entry name" value="HYDRO"/>
    <property type="match status" value="1"/>
</dbReference>
<sequence>MVAIKSLAILALPVMAMASPLVPRTDSPSQCNNGSLQCCNSSMTQDRGNLQIAQGVLGGLLGGLLGLGGLLDLVDLNALIGVQCSPISIVGNANTCTQQTVCCSNNNFNGLIALGCTPININL</sequence>
<gene>
    <name evidence="5" type="primary">pri2</name>
</gene>
<reference key="1">
    <citation type="journal article" date="1999" name="Curr. Genet.">
        <title>Aa-Pri2, a single-copy gene from Agrocybe aegerita, specifically expressed during fruiting initiation, encodes a hydrophobin with a leucine-zipper domain.</title>
        <authorList>
            <person name="Santos C."/>
            <person name="Labarere J."/>
        </authorList>
    </citation>
    <scope>NUCLEOTIDE SEQUENCE [GENOMIC DNA]</scope>
    <scope>DEVELOPMENTAL STAGE</scope>
    <source>
        <strain>SM51</strain>
    </source>
</reference>
<accession>Q9Y8F0</accession>
<protein>
    <recommendedName>
        <fullName evidence="5">Class I hydrophobin pri2</fullName>
    </recommendedName>
</protein>
<keyword id="KW-0134">Cell wall</keyword>
<keyword id="KW-1015">Disulfide bond</keyword>
<keyword id="KW-0325">Glycoprotein</keyword>
<keyword id="KW-0964">Secreted</keyword>
<keyword id="KW-0732">Signal</keyword>
<feature type="signal peptide" evidence="2">
    <location>
        <begin position="1"/>
        <end position="18"/>
    </location>
</feature>
<feature type="chain" id="PRO_5013986267" description="Class I hydrophobin pri2">
    <location>
        <begin position="19"/>
        <end position="123"/>
    </location>
</feature>
<feature type="glycosylation site" description="N-linked (GlcNAc...) asparagine" evidence="3">
    <location>
        <position position="33"/>
    </location>
</feature>
<feature type="glycosylation site" description="N-linked (GlcNAc...) asparagine" evidence="3">
    <location>
        <position position="40"/>
    </location>
</feature>
<feature type="disulfide bond" evidence="1">
    <location>
        <begin position="31"/>
        <end position="102"/>
    </location>
</feature>
<feature type="disulfide bond" evidence="1">
    <location>
        <begin position="38"/>
        <end position="96"/>
    </location>
</feature>
<feature type="disulfide bond" evidence="1">
    <location>
        <begin position="39"/>
        <end position="84"/>
    </location>
</feature>
<feature type="disulfide bond" evidence="1">
    <location>
        <begin position="103"/>
        <end position="116"/>
    </location>
</feature>
<organism>
    <name type="scientific">Cyclocybe aegerita</name>
    <name type="common">Black poplar mushroom</name>
    <name type="synonym">Agrocybe aegerita</name>
    <dbReference type="NCBI Taxonomy" id="1973307"/>
    <lineage>
        <taxon>Eukaryota</taxon>
        <taxon>Fungi</taxon>
        <taxon>Dikarya</taxon>
        <taxon>Basidiomycota</taxon>
        <taxon>Agaricomycotina</taxon>
        <taxon>Agaricomycetes</taxon>
        <taxon>Agaricomycetidae</taxon>
        <taxon>Agaricales</taxon>
        <taxon>Agaricineae</taxon>
        <taxon>Bolbitiaceae</taxon>
        <taxon>Cyclocybe</taxon>
    </lineage>
</organism>
<name>PRI2_CYCAE</name>
<comment type="function">
    <text evidence="6">Aerial growth, conidiation, and dispersal of filamentous fungi in the environment rely upon a capability of their secreting small amphipathic proteins called hydrophobins (HPBs) with low sequence identity. Class I can self-assemble into an outermost layer of rodlet bundles on aerial cell surfaces, conferring cellular hydrophobicity that supports fungal growth, development and dispersal; whereas Class II form highly ordered films at water-air interfaces through intermolecular interactions but contribute nothing to the rodlet structure.</text>
</comment>
<comment type="subunit">
    <text evidence="1">Self-assembles to form functional amyloid fibrils called rodlets. Self-assembly into fibrillar rodlets occurs spontaneously at hydrophobic:hydrophilic interfaces and the rodlets further associate laterally to form amphipathic monolayers.</text>
</comment>
<comment type="subcellular location">
    <subcellularLocation>
        <location evidence="7">Secreted</location>
    </subcellularLocation>
    <subcellularLocation>
        <location evidence="7">Secreted</location>
        <location evidence="7">Cell wall</location>
    </subcellularLocation>
</comment>
<comment type="developmental stage">
    <text evidence="4">Specifically expressed during basidiocarp differentiation.</text>
</comment>
<comment type="similarity">
    <text evidence="6">Belongs to the fungal hydrophobin family.</text>
</comment>
<proteinExistence type="evidence at transcript level"/>